<dbReference type="EMBL" id="AE005174">
    <property type="protein sequence ID" value="AAG59328.1"/>
    <property type="molecule type" value="Genomic_DNA"/>
</dbReference>
<dbReference type="EMBL" id="BA000007">
    <property type="status" value="NOT_ANNOTATED_CDS"/>
    <property type="molecule type" value="Genomic_DNA"/>
</dbReference>
<dbReference type="PIR" id="D86108">
    <property type="entry name" value="D86108"/>
</dbReference>
<dbReference type="RefSeq" id="WP_001173343.1">
    <property type="nucleotide sequence ID" value="NZ_VOAI01000008.1"/>
</dbReference>
<dbReference type="STRING" id="155864.Z5731"/>
<dbReference type="GeneID" id="93777703"/>
<dbReference type="KEGG" id="ece:Z5731"/>
<dbReference type="PATRIC" id="fig|83334.175.peg.5666"/>
<dbReference type="OMA" id="MSTFECI"/>
<dbReference type="Proteomes" id="UP000000558">
    <property type="component" value="Chromosome"/>
</dbReference>
<dbReference type="Proteomes" id="UP000002519">
    <property type="component" value="Chromosome"/>
</dbReference>
<dbReference type="GO" id="GO:0005886">
    <property type="term" value="C:plasma membrane"/>
    <property type="evidence" value="ECO:0007669"/>
    <property type="project" value="UniProtKB-SubCell"/>
</dbReference>
<dbReference type="InterPro" id="IPR019689">
    <property type="entry name" value="Toxin_GhoT/OrtT"/>
</dbReference>
<dbReference type="Pfam" id="PF10753">
    <property type="entry name" value="Toxin_GhoT_OrtT"/>
    <property type="match status" value="1"/>
</dbReference>
<proteinExistence type="inferred from homology"/>
<accession>P64648</accession>
<accession>P58038</accession>
<keyword id="KW-0997">Cell inner membrane</keyword>
<keyword id="KW-1003">Cell membrane</keyword>
<keyword id="KW-0472">Membrane</keyword>
<keyword id="KW-1185">Reference proteome</keyword>
<keyword id="KW-1277">Toxin-antitoxin system</keyword>
<keyword id="KW-0812">Transmembrane</keyword>
<keyword id="KW-1133">Transmembrane helix</keyword>
<feature type="chain" id="PRO_0000169736" description="Toxin GhoT">
    <location>
        <begin position="1"/>
        <end position="57"/>
    </location>
</feature>
<feature type="transmembrane region" description="Helical" evidence="2">
    <location>
        <begin position="7"/>
        <end position="27"/>
    </location>
</feature>
<feature type="transmembrane region" description="Helical" evidence="2">
    <location>
        <begin position="37"/>
        <end position="57"/>
    </location>
</feature>
<gene>
    <name evidence="3" type="primary">ghoT</name>
    <name type="ordered locus">Z5731</name>
    <name type="ordered locus">ECs5110.1</name>
</gene>
<reference key="1">
    <citation type="journal article" date="2001" name="Nature">
        <title>Genome sequence of enterohaemorrhagic Escherichia coli O157:H7.</title>
        <authorList>
            <person name="Perna N.T."/>
            <person name="Plunkett G. III"/>
            <person name="Burland V."/>
            <person name="Mau B."/>
            <person name="Glasner J.D."/>
            <person name="Rose D.J."/>
            <person name="Mayhew G.F."/>
            <person name="Evans P.S."/>
            <person name="Gregor J."/>
            <person name="Kirkpatrick H.A."/>
            <person name="Posfai G."/>
            <person name="Hackett J."/>
            <person name="Klink S."/>
            <person name="Boutin A."/>
            <person name="Shao Y."/>
            <person name="Miller L."/>
            <person name="Grotbeck E.J."/>
            <person name="Davis N.W."/>
            <person name="Lim A."/>
            <person name="Dimalanta E.T."/>
            <person name="Potamousis K."/>
            <person name="Apodaca J."/>
            <person name="Anantharaman T.S."/>
            <person name="Lin J."/>
            <person name="Yen G."/>
            <person name="Schwartz D.C."/>
            <person name="Welch R.A."/>
            <person name="Blattner F.R."/>
        </authorList>
    </citation>
    <scope>NUCLEOTIDE SEQUENCE [LARGE SCALE GENOMIC DNA]</scope>
    <source>
        <strain>O157:H7 / EDL933 / ATCC 700927 / EHEC</strain>
    </source>
</reference>
<reference key="2">
    <citation type="journal article" date="2001" name="DNA Res.">
        <title>Complete genome sequence of enterohemorrhagic Escherichia coli O157:H7 and genomic comparison with a laboratory strain K-12.</title>
        <authorList>
            <person name="Hayashi T."/>
            <person name="Makino K."/>
            <person name="Ohnishi M."/>
            <person name="Kurokawa K."/>
            <person name="Ishii K."/>
            <person name="Yokoyama K."/>
            <person name="Han C.-G."/>
            <person name="Ohtsubo E."/>
            <person name="Nakayama K."/>
            <person name="Murata T."/>
            <person name="Tanaka M."/>
            <person name="Tobe T."/>
            <person name="Iida T."/>
            <person name="Takami H."/>
            <person name="Honda T."/>
            <person name="Sasakawa C."/>
            <person name="Ogasawara N."/>
            <person name="Yasunaga T."/>
            <person name="Kuhara S."/>
            <person name="Shiba T."/>
            <person name="Hattori M."/>
            <person name="Shinagawa H."/>
        </authorList>
    </citation>
    <scope>NUCLEOTIDE SEQUENCE [LARGE SCALE GENOMIC DNA]</scope>
    <source>
        <strain>O157:H7 / Sakai / RIMD 0509952 / EHEC</strain>
    </source>
</reference>
<evidence type="ECO:0000250" key="1">
    <source>
        <dbReference type="UniProtKB" id="P64646"/>
    </source>
</evidence>
<evidence type="ECO:0000255" key="2"/>
<evidence type="ECO:0000305" key="3"/>
<protein>
    <recommendedName>
        <fullName evidence="3">Toxin GhoT</fullName>
    </recommendedName>
</protein>
<name>GHOT_ECO57</name>
<comment type="function">
    <text evidence="1">Toxic component of a type V toxin-antitoxin (TA) system. Causes membrane damage when induced by MqsR, slowing cell growth and leading to the formation of dormant persister cells; involved with GhoS, its antitoxin, in reducing cell growth during antibacterial stress. Its toxic effects are neutralized by GhoS, which digests ghoT transcripts in a sequence-specific manner.</text>
</comment>
<comment type="subcellular location">
    <subcellularLocation>
        <location evidence="1">Cell inner membrane</location>
        <topology evidence="3">Multi-pass membrane protein</topology>
    </subcellularLocation>
</comment>
<comment type="similarity">
    <text evidence="3">Belongs to the GhoT/OrtT toxin family.</text>
</comment>
<organism>
    <name type="scientific">Escherichia coli O157:H7</name>
    <dbReference type="NCBI Taxonomy" id="83334"/>
    <lineage>
        <taxon>Bacteria</taxon>
        <taxon>Pseudomonadati</taxon>
        <taxon>Pseudomonadota</taxon>
        <taxon>Gammaproteobacteria</taxon>
        <taxon>Enterobacterales</taxon>
        <taxon>Enterobacteriaceae</taxon>
        <taxon>Escherichia</taxon>
    </lineage>
</organism>
<sequence>MALFSKILIFYVIGVNISFVIIWFISHEKTHIRLLSAFLVGITWPMSLPVALLFSLF</sequence>